<evidence type="ECO:0000250" key="1"/>
<evidence type="ECO:0000255" key="2">
    <source>
        <dbReference type="HAMAP-Rule" id="MF_01333"/>
    </source>
</evidence>
<evidence type="ECO:0000305" key="3"/>
<sequence length="179" mass="20318">MAKLHDYYKDEVVNKLMTEFNYNSVMQVPRVEKITLNMGVGEAIADKKLLDNAAADLTAISGQKPLITKARKSVAGFKIRQGYPIGCKVTLRGERMWEFFERLITIAVPRIRDFRGLSAKSFDGRGNYSMGVREQIIFPEIDYDKVDRVRGLDITITTTAKSDEEGRALLAAFDFPFRK</sequence>
<feature type="initiator methionine" description="Removed" evidence="1">
    <location>
        <position position="1"/>
    </location>
</feature>
<feature type="chain" id="PRO_0000124980" description="Large ribosomal subunit protein uL5">
    <location>
        <begin position="2"/>
        <end position="179"/>
    </location>
</feature>
<dbReference type="EMBL" id="AL513382">
    <property type="protein sequence ID" value="CAD09158.1"/>
    <property type="molecule type" value="Genomic_DNA"/>
</dbReference>
<dbReference type="EMBL" id="AE014613">
    <property type="protein sequence ID" value="AAO71544.1"/>
    <property type="molecule type" value="Genomic_DNA"/>
</dbReference>
<dbReference type="RefSeq" id="NP_458472.1">
    <property type="nucleotide sequence ID" value="NC_003198.1"/>
</dbReference>
<dbReference type="RefSeq" id="WP_001096206.1">
    <property type="nucleotide sequence ID" value="NZ_WSUR01000046.1"/>
</dbReference>
<dbReference type="SMR" id="P62404"/>
<dbReference type="STRING" id="220341.gene:17588198"/>
<dbReference type="GeneID" id="93751944"/>
<dbReference type="KEGG" id="stt:t4077"/>
<dbReference type="KEGG" id="sty:STY4370"/>
<dbReference type="PATRIC" id="fig|220341.7.peg.4466"/>
<dbReference type="eggNOG" id="COG0094">
    <property type="taxonomic scope" value="Bacteria"/>
</dbReference>
<dbReference type="HOGENOM" id="CLU_061015_2_1_6"/>
<dbReference type="OMA" id="PIGCAVT"/>
<dbReference type="OrthoDB" id="9806626at2"/>
<dbReference type="Proteomes" id="UP000000541">
    <property type="component" value="Chromosome"/>
</dbReference>
<dbReference type="Proteomes" id="UP000002670">
    <property type="component" value="Chromosome"/>
</dbReference>
<dbReference type="GO" id="GO:1990904">
    <property type="term" value="C:ribonucleoprotein complex"/>
    <property type="evidence" value="ECO:0007669"/>
    <property type="project" value="UniProtKB-KW"/>
</dbReference>
<dbReference type="GO" id="GO:0005840">
    <property type="term" value="C:ribosome"/>
    <property type="evidence" value="ECO:0007669"/>
    <property type="project" value="UniProtKB-KW"/>
</dbReference>
<dbReference type="GO" id="GO:0019843">
    <property type="term" value="F:rRNA binding"/>
    <property type="evidence" value="ECO:0007669"/>
    <property type="project" value="UniProtKB-UniRule"/>
</dbReference>
<dbReference type="GO" id="GO:0003735">
    <property type="term" value="F:structural constituent of ribosome"/>
    <property type="evidence" value="ECO:0007669"/>
    <property type="project" value="InterPro"/>
</dbReference>
<dbReference type="GO" id="GO:0000049">
    <property type="term" value="F:tRNA binding"/>
    <property type="evidence" value="ECO:0007669"/>
    <property type="project" value="UniProtKB-UniRule"/>
</dbReference>
<dbReference type="GO" id="GO:0006412">
    <property type="term" value="P:translation"/>
    <property type="evidence" value="ECO:0007669"/>
    <property type="project" value="UniProtKB-UniRule"/>
</dbReference>
<dbReference type="FunFam" id="3.30.1440.10:FF:000001">
    <property type="entry name" value="50S ribosomal protein L5"/>
    <property type="match status" value="1"/>
</dbReference>
<dbReference type="Gene3D" id="3.30.1440.10">
    <property type="match status" value="1"/>
</dbReference>
<dbReference type="HAMAP" id="MF_01333_B">
    <property type="entry name" value="Ribosomal_uL5_B"/>
    <property type="match status" value="1"/>
</dbReference>
<dbReference type="InterPro" id="IPR002132">
    <property type="entry name" value="Ribosomal_uL5"/>
</dbReference>
<dbReference type="InterPro" id="IPR020930">
    <property type="entry name" value="Ribosomal_uL5_bac-type"/>
</dbReference>
<dbReference type="InterPro" id="IPR031309">
    <property type="entry name" value="Ribosomal_uL5_C"/>
</dbReference>
<dbReference type="InterPro" id="IPR020929">
    <property type="entry name" value="Ribosomal_uL5_CS"/>
</dbReference>
<dbReference type="InterPro" id="IPR022803">
    <property type="entry name" value="Ribosomal_uL5_dom_sf"/>
</dbReference>
<dbReference type="InterPro" id="IPR031310">
    <property type="entry name" value="Ribosomal_uL5_N"/>
</dbReference>
<dbReference type="NCBIfam" id="NF000585">
    <property type="entry name" value="PRK00010.1"/>
    <property type="match status" value="1"/>
</dbReference>
<dbReference type="PANTHER" id="PTHR11994">
    <property type="entry name" value="60S RIBOSOMAL PROTEIN L11-RELATED"/>
    <property type="match status" value="1"/>
</dbReference>
<dbReference type="Pfam" id="PF00281">
    <property type="entry name" value="Ribosomal_L5"/>
    <property type="match status" value="1"/>
</dbReference>
<dbReference type="Pfam" id="PF00673">
    <property type="entry name" value="Ribosomal_L5_C"/>
    <property type="match status" value="1"/>
</dbReference>
<dbReference type="PIRSF" id="PIRSF002161">
    <property type="entry name" value="Ribosomal_L5"/>
    <property type="match status" value="1"/>
</dbReference>
<dbReference type="SUPFAM" id="SSF55282">
    <property type="entry name" value="RL5-like"/>
    <property type="match status" value="1"/>
</dbReference>
<dbReference type="PROSITE" id="PS00358">
    <property type="entry name" value="RIBOSOMAL_L5"/>
    <property type="match status" value="1"/>
</dbReference>
<name>RL5_SALTI</name>
<reference key="1">
    <citation type="journal article" date="2001" name="Nature">
        <title>Complete genome sequence of a multiple drug resistant Salmonella enterica serovar Typhi CT18.</title>
        <authorList>
            <person name="Parkhill J."/>
            <person name="Dougan G."/>
            <person name="James K.D."/>
            <person name="Thomson N.R."/>
            <person name="Pickard D."/>
            <person name="Wain J."/>
            <person name="Churcher C.M."/>
            <person name="Mungall K.L."/>
            <person name="Bentley S.D."/>
            <person name="Holden M.T.G."/>
            <person name="Sebaihia M."/>
            <person name="Baker S."/>
            <person name="Basham D."/>
            <person name="Brooks K."/>
            <person name="Chillingworth T."/>
            <person name="Connerton P."/>
            <person name="Cronin A."/>
            <person name="Davis P."/>
            <person name="Davies R.M."/>
            <person name="Dowd L."/>
            <person name="White N."/>
            <person name="Farrar J."/>
            <person name="Feltwell T."/>
            <person name="Hamlin N."/>
            <person name="Haque A."/>
            <person name="Hien T.T."/>
            <person name="Holroyd S."/>
            <person name="Jagels K."/>
            <person name="Krogh A."/>
            <person name="Larsen T.S."/>
            <person name="Leather S."/>
            <person name="Moule S."/>
            <person name="O'Gaora P."/>
            <person name="Parry C."/>
            <person name="Quail M.A."/>
            <person name="Rutherford K.M."/>
            <person name="Simmonds M."/>
            <person name="Skelton J."/>
            <person name="Stevens K."/>
            <person name="Whitehead S."/>
            <person name="Barrell B.G."/>
        </authorList>
    </citation>
    <scope>NUCLEOTIDE SEQUENCE [LARGE SCALE GENOMIC DNA]</scope>
    <source>
        <strain>CT18</strain>
    </source>
</reference>
<reference key="2">
    <citation type="journal article" date="2003" name="J. Bacteriol.">
        <title>Comparative genomics of Salmonella enterica serovar Typhi strains Ty2 and CT18.</title>
        <authorList>
            <person name="Deng W."/>
            <person name="Liou S.-R."/>
            <person name="Plunkett G. III"/>
            <person name="Mayhew G.F."/>
            <person name="Rose D.J."/>
            <person name="Burland V."/>
            <person name="Kodoyianni V."/>
            <person name="Schwartz D.C."/>
            <person name="Blattner F.R."/>
        </authorList>
    </citation>
    <scope>NUCLEOTIDE SEQUENCE [LARGE SCALE GENOMIC DNA]</scope>
    <source>
        <strain>ATCC 700931 / Ty2</strain>
    </source>
</reference>
<comment type="function">
    <text evidence="2">This is one of the proteins that bind and probably mediate the attachment of the 5S RNA into the large ribosomal subunit, where it forms part of the central protuberance. In the 70S ribosome it contacts protein S13 of the 30S subunit (bridge B1b), connecting the 2 subunits; this bridge is implicated in subunit movement. Contacts the P site tRNA; the 5S rRNA and some of its associated proteins might help stabilize positioning of ribosome-bound tRNAs.</text>
</comment>
<comment type="subunit">
    <text evidence="2">Part of the 50S ribosomal subunit; part of the 5S rRNA/L5/L18/L25 subcomplex. Contacts the 5S rRNA and the P site tRNA. Forms a bridge to the 30S subunit in the 70S ribosome.</text>
</comment>
<comment type="similarity">
    <text evidence="2">Belongs to the universal ribosomal protein uL5 family.</text>
</comment>
<keyword id="KW-0687">Ribonucleoprotein</keyword>
<keyword id="KW-0689">Ribosomal protein</keyword>
<keyword id="KW-0694">RNA-binding</keyword>
<keyword id="KW-0699">rRNA-binding</keyword>
<keyword id="KW-0820">tRNA-binding</keyword>
<organism>
    <name type="scientific">Salmonella typhi</name>
    <dbReference type="NCBI Taxonomy" id="90370"/>
    <lineage>
        <taxon>Bacteria</taxon>
        <taxon>Pseudomonadati</taxon>
        <taxon>Pseudomonadota</taxon>
        <taxon>Gammaproteobacteria</taxon>
        <taxon>Enterobacterales</taxon>
        <taxon>Enterobacteriaceae</taxon>
        <taxon>Salmonella</taxon>
    </lineage>
</organism>
<accession>P62404</accession>
<accession>P37436</accession>
<protein>
    <recommendedName>
        <fullName evidence="2">Large ribosomal subunit protein uL5</fullName>
    </recommendedName>
    <alternativeName>
        <fullName evidence="3">50S ribosomal protein L5</fullName>
    </alternativeName>
</protein>
<proteinExistence type="inferred from homology"/>
<gene>
    <name evidence="2" type="primary">rplE</name>
    <name type="ordered locus">STY4370</name>
    <name type="ordered locus">t4077</name>
</gene>